<comment type="function">
    <text evidence="1">Cleaves peptides in various proteins in a process that requires ATP hydrolysis. Has a chymotrypsin-like activity. Plays a major role in the degradation of misfolded proteins.</text>
</comment>
<comment type="catalytic activity">
    <reaction evidence="1">
        <text>Hydrolysis of proteins to small peptides in the presence of ATP and magnesium. alpha-casein is the usual test substrate. In the absence of ATP, only oligopeptides shorter than five residues are hydrolyzed (such as succinyl-Leu-Tyr-|-NHMec, and Leu-Tyr-Leu-|-Tyr-Trp, in which cleavage of the -Tyr-|-Leu- and -Tyr-|-Trp bonds also occurs).</text>
        <dbReference type="EC" id="3.4.21.92"/>
    </reaction>
</comment>
<comment type="subunit">
    <text evidence="1">Fourteen ClpP subunits assemble into 2 heptameric rings which stack back to back to give a disk-like structure with a central cavity, resembling the structure of eukaryotic proteasomes.</text>
</comment>
<comment type="subcellular location">
    <subcellularLocation>
        <location evidence="1">Cytoplasm</location>
    </subcellularLocation>
</comment>
<comment type="similarity">
    <text evidence="1">Belongs to the peptidase S14 family.</text>
</comment>
<evidence type="ECO:0000255" key="1">
    <source>
        <dbReference type="HAMAP-Rule" id="MF_00444"/>
    </source>
</evidence>
<accession>Q9X7L1</accession>
<reference key="1">
    <citation type="submission" date="1999-02" db="EMBL/GenBank/DDBJ databases">
        <title>The Rhizobium meliloti leuA gene is essential for symbiosis.</title>
        <authorList>
            <person name="Sanjuan-Pinilla J.M."/>
            <person name="Olivares J."/>
            <person name="Sanjuan J."/>
        </authorList>
    </citation>
    <scope>NUCLEOTIDE SEQUENCE [GENOMIC DNA]</scope>
    <source>
        <strain>GR4</strain>
    </source>
</reference>
<reference key="2">
    <citation type="journal article" date="2001" name="Proc. Natl. Acad. Sci. U.S.A.">
        <title>Analysis of the chromosome sequence of the legume symbiont Sinorhizobium meliloti strain 1021.</title>
        <authorList>
            <person name="Capela D."/>
            <person name="Barloy-Hubler F."/>
            <person name="Gouzy J."/>
            <person name="Bothe G."/>
            <person name="Ampe F."/>
            <person name="Batut J."/>
            <person name="Boistard P."/>
            <person name="Becker A."/>
            <person name="Boutry M."/>
            <person name="Cadieu E."/>
            <person name="Dreano S."/>
            <person name="Gloux S."/>
            <person name="Godrie T."/>
            <person name="Goffeau A."/>
            <person name="Kahn D."/>
            <person name="Kiss E."/>
            <person name="Lelaure V."/>
            <person name="Masuy D."/>
            <person name="Pohl T."/>
            <person name="Portetelle D."/>
            <person name="Puehler A."/>
            <person name="Purnelle B."/>
            <person name="Ramsperger U."/>
            <person name="Renard C."/>
            <person name="Thebault P."/>
            <person name="Vandenbol M."/>
            <person name="Weidner S."/>
            <person name="Galibert F."/>
        </authorList>
    </citation>
    <scope>NUCLEOTIDE SEQUENCE [LARGE SCALE GENOMIC DNA]</scope>
    <source>
        <strain>1021</strain>
    </source>
</reference>
<reference key="3">
    <citation type="journal article" date="2001" name="Science">
        <title>The composite genome of the legume symbiont Sinorhizobium meliloti.</title>
        <authorList>
            <person name="Galibert F."/>
            <person name="Finan T.M."/>
            <person name="Long S.R."/>
            <person name="Puehler A."/>
            <person name="Abola P."/>
            <person name="Ampe F."/>
            <person name="Barloy-Hubler F."/>
            <person name="Barnett M.J."/>
            <person name="Becker A."/>
            <person name="Boistard P."/>
            <person name="Bothe G."/>
            <person name="Boutry M."/>
            <person name="Bowser L."/>
            <person name="Buhrmester J."/>
            <person name="Cadieu E."/>
            <person name="Capela D."/>
            <person name="Chain P."/>
            <person name="Cowie A."/>
            <person name="Davis R.W."/>
            <person name="Dreano S."/>
            <person name="Federspiel N.A."/>
            <person name="Fisher R.F."/>
            <person name="Gloux S."/>
            <person name="Godrie T."/>
            <person name="Goffeau A."/>
            <person name="Golding B."/>
            <person name="Gouzy J."/>
            <person name="Gurjal M."/>
            <person name="Hernandez-Lucas I."/>
            <person name="Hong A."/>
            <person name="Huizar L."/>
            <person name="Hyman R.W."/>
            <person name="Jones T."/>
            <person name="Kahn D."/>
            <person name="Kahn M.L."/>
            <person name="Kalman S."/>
            <person name="Keating D.H."/>
            <person name="Kiss E."/>
            <person name="Komp C."/>
            <person name="Lelaure V."/>
            <person name="Masuy D."/>
            <person name="Palm C."/>
            <person name="Peck M.C."/>
            <person name="Pohl T.M."/>
            <person name="Portetelle D."/>
            <person name="Purnelle B."/>
            <person name="Ramsperger U."/>
            <person name="Surzycki R."/>
            <person name="Thebault P."/>
            <person name="Vandenbol M."/>
            <person name="Vorhoelter F.J."/>
            <person name="Weidner S."/>
            <person name="Wells D.H."/>
            <person name="Wong K."/>
            <person name="Yeh K.-C."/>
            <person name="Batut J."/>
        </authorList>
    </citation>
    <scope>NUCLEOTIDE SEQUENCE [LARGE SCALE GENOMIC DNA]</scope>
    <source>
        <strain>1021</strain>
    </source>
</reference>
<proteinExistence type="inferred from homology"/>
<dbReference type="EC" id="3.4.21.92" evidence="1"/>
<dbReference type="EMBL" id="AJ132004">
    <property type="protein sequence ID" value="CAB39976.1"/>
    <property type="molecule type" value="Genomic_DNA"/>
</dbReference>
<dbReference type="EMBL" id="AL591688">
    <property type="protein sequence ID" value="CAC46961.1"/>
    <property type="molecule type" value="Genomic_DNA"/>
</dbReference>
<dbReference type="RefSeq" id="NP_386488.1">
    <property type="nucleotide sequence ID" value="NC_003047.1"/>
</dbReference>
<dbReference type="RefSeq" id="WP_003534438.1">
    <property type="nucleotide sequence ID" value="NC_003047.1"/>
</dbReference>
<dbReference type="SMR" id="Q9X7L1"/>
<dbReference type="EnsemblBacteria" id="CAC46961">
    <property type="protein sequence ID" value="CAC46961"/>
    <property type="gene ID" value="SMc02720"/>
</dbReference>
<dbReference type="KEGG" id="sme:SMc02720"/>
<dbReference type="PATRIC" id="fig|266834.11.peg.3866"/>
<dbReference type="eggNOG" id="COG0740">
    <property type="taxonomic scope" value="Bacteria"/>
</dbReference>
<dbReference type="HOGENOM" id="CLU_058707_4_0_5"/>
<dbReference type="OrthoDB" id="9802800at2"/>
<dbReference type="Proteomes" id="UP000001976">
    <property type="component" value="Chromosome"/>
</dbReference>
<dbReference type="GO" id="GO:0005737">
    <property type="term" value="C:cytoplasm"/>
    <property type="evidence" value="ECO:0007669"/>
    <property type="project" value="UniProtKB-SubCell"/>
</dbReference>
<dbReference type="GO" id="GO:0009368">
    <property type="term" value="C:endopeptidase Clp complex"/>
    <property type="evidence" value="ECO:0007669"/>
    <property type="project" value="TreeGrafter"/>
</dbReference>
<dbReference type="GO" id="GO:0004176">
    <property type="term" value="F:ATP-dependent peptidase activity"/>
    <property type="evidence" value="ECO:0007669"/>
    <property type="project" value="InterPro"/>
</dbReference>
<dbReference type="GO" id="GO:0051117">
    <property type="term" value="F:ATPase binding"/>
    <property type="evidence" value="ECO:0007669"/>
    <property type="project" value="TreeGrafter"/>
</dbReference>
<dbReference type="GO" id="GO:0004252">
    <property type="term" value="F:serine-type endopeptidase activity"/>
    <property type="evidence" value="ECO:0007669"/>
    <property type="project" value="UniProtKB-UniRule"/>
</dbReference>
<dbReference type="GO" id="GO:0006515">
    <property type="term" value="P:protein quality control for misfolded or incompletely synthesized proteins"/>
    <property type="evidence" value="ECO:0007669"/>
    <property type="project" value="TreeGrafter"/>
</dbReference>
<dbReference type="CDD" id="cd07017">
    <property type="entry name" value="S14_ClpP_2"/>
    <property type="match status" value="1"/>
</dbReference>
<dbReference type="Gene3D" id="3.90.226.10">
    <property type="entry name" value="2-enoyl-CoA Hydratase, Chain A, domain 1"/>
    <property type="match status" value="1"/>
</dbReference>
<dbReference type="HAMAP" id="MF_00444">
    <property type="entry name" value="ClpP"/>
    <property type="match status" value="1"/>
</dbReference>
<dbReference type="InterPro" id="IPR001907">
    <property type="entry name" value="ClpP"/>
</dbReference>
<dbReference type="InterPro" id="IPR029045">
    <property type="entry name" value="ClpP/crotonase-like_dom_sf"/>
</dbReference>
<dbReference type="InterPro" id="IPR023562">
    <property type="entry name" value="ClpP/TepA"/>
</dbReference>
<dbReference type="InterPro" id="IPR033135">
    <property type="entry name" value="ClpP_His_AS"/>
</dbReference>
<dbReference type="NCBIfam" id="NF009205">
    <property type="entry name" value="PRK12553.1"/>
    <property type="match status" value="1"/>
</dbReference>
<dbReference type="PANTHER" id="PTHR10381">
    <property type="entry name" value="ATP-DEPENDENT CLP PROTEASE PROTEOLYTIC SUBUNIT"/>
    <property type="match status" value="1"/>
</dbReference>
<dbReference type="PANTHER" id="PTHR10381:SF70">
    <property type="entry name" value="ATP-DEPENDENT CLP PROTEASE PROTEOLYTIC SUBUNIT"/>
    <property type="match status" value="1"/>
</dbReference>
<dbReference type="Pfam" id="PF00574">
    <property type="entry name" value="CLP_protease"/>
    <property type="match status" value="1"/>
</dbReference>
<dbReference type="PRINTS" id="PR00127">
    <property type="entry name" value="CLPPROTEASEP"/>
</dbReference>
<dbReference type="SUPFAM" id="SSF52096">
    <property type="entry name" value="ClpP/crotonase"/>
    <property type="match status" value="1"/>
</dbReference>
<dbReference type="PROSITE" id="PS00382">
    <property type="entry name" value="CLP_PROTEASE_HIS"/>
    <property type="match status" value="1"/>
</dbReference>
<protein>
    <recommendedName>
        <fullName evidence="1">ATP-dependent Clp protease proteolytic subunit 3</fullName>
        <ecNumber evidence="1">3.4.21.92</ecNumber>
    </recommendedName>
    <alternativeName>
        <fullName evidence="1">Endopeptidase Clp 3</fullName>
    </alternativeName>
</protein>
<sequence length="195" mass="21567">MRNDDDQEEKKTELPLGKETEANLFKSRSIFIYGTITQELAQKVCSQLVALAAASDDDIRLFVNSPGGHVESGDSIHDMIKFVKPKVWTIGTGWVASAGALIYVAAPKEQRLCLPNTRFLLHQPSGGTRGMASDIEIQAREIIKMNERLNRIFSEATGQPVDKIAKDTDRDYWLGAEEAKAYGLVSRIVTSIAEI</sequence>
<feature type="chain" id="PRO_0000179635" description="ATP-dependent Clp protease proteolytic subunit 3">
    <location>
        <begin position="1"/>
        <end position="195"/>
    </location>
</feature>
<feature type="active site" description="Nucleophile" evidence="1">
    <location>
        <position position="97"/>
    </location>
</feature>
<feature type="active site" evidence="1">
    <location>
        <position position="122"/>
    </location>
</feature>
<keyword id="KW-0963">Cytoplasm</keyword>
<keyword id="KW-0378">Hydrolase</keyword>
<keyword id="KW-0645">Protease</keyword>
<keyword id="KW-1185">Reference proteome</keyword>
<keyword id="KW-0720">Serine protease</keyword>
<gene>
    <name evidence="1" type="primary">clpP3</name>
    <name type="ordered locus">R02382</name>
    <name type="ORF">SMc02720</name>
</gene>
<name>CLPP3_RHIME</name>
<organism>
    <name type="scientific">Rhizobium meliloti (strain 1021)</name>
    <name type="common">Ensifer meliloti</name>
    <name type="synonym">Sinorhizobium meliloti</name>
    <dbReference type="NCBI Taxonomy" id="266834"/>
    <lineage>
        <taxon>Bacteria</taxon>
        <taxon>Pseudomonadati</taxon>
        <taxon>Pseudomonadota</taxon>
        <taxon>Alphaproteobacteria</taxon>
        <taxon>Hyphomicrobiales</taxon>
        <taxon>Rhizobiaceae</taxon>
        <taxon>Sinorhizobium/Ensifer group</taxon>
        <taxon>Sinorhizobium</taxon>
    </lineage>
</organism>